<comment type="function">
    <text>Acts as a component of the Sec62/63 complex which is involved in SRP-independent post-translational translocation across the endoplasmic reticulum (ER) and functions together with the Sec61 complex and KAR2 in a channel-forming translocon complex. A cycle of assembly and disassembly of Sec62/63 complex from SEC61 may govern the activity of the translocon. SEC66 is required to attach or retain SEC72 in the SEC63 complex. It is essential for growth at elevated temperatures.</text>
</comment>
<comment type="subunit">
    <text evidence="2 3 4">Component of the heterotetrameric Sec62/63complex composed of SEC62, SEC63, SEC66 and SEC72. The Sec62/63 complex associates with the Sec61 complex to form the Sec complex. Part of a complex consisting of KAR2, SEC63, SEC66 and SEC72.</text>
</comment>
<comment type="interaction">
    <interactant intactId="EBI-16647">
        <id>P33754</id>
    </interactant>
    <interactant intactId="EBI-16400">
        <id>P32915</id>
        <label>SEC61</label>
    </interactant>
    <organismsDiffer>false</organismsDiffer>
    <experiments>12</experiments>
</comment>
<comment type="interaction">
    <interactant intactId="EBI-16647">
        <id>P33754</id>
    </interactant>
    <interactant intactId="EBI-16636">
        <id>P14906</id>
        <label>SEC63</label>
    </interactant>
    <organismsDiffer>false</organismsDiffer>
    <experiments>5</experiments>
</comment>
<comment type="interaction">
    <interactant intactId="EBI-16647">
        <id>P33754</id>
    </interactant>
    <interactant intactId="EBI-16651">
        <id>P39742</id>
        <label>SEC72</label>
    </interactant>
    <organismsDiffer>false</organismsDiffer>
    <experiments>6</experiments>
</comment>
<comment type="subcellular location">
    <subcellularLocation>
        <location evidence="4">Endoplasmic reticulum membrane</location>
        <topology evidence="4">Single-pass type II membrane protein</topology>
    </subcellularLocation>
</comment>
<comment type="miscellaneous">
    <text evidence="1">Present with 7820 molecules/cell in log phase SD medium.</text>
</comment>
<comment type="similarity">
    <text evidence="5">To S.pombe SpBC409.21.</text>
</comment>
<name>SEC66_YEAST</name>
<proteinExistence type="evidence at protein level"/>
<keyword id="KW-0002">3D-structure</keyword>
<keyword id="KW-0903">Direct protein sequencing</keyword>
<keyword id="KW-0256">Endoplasmic reticulum</keyword>
<keyword id="KW-0325">Glycoprotein</keyword>
<keyword id="KW-0472">Membrane</keyword>
<keyword id="KW-0653">Protein transport</keyword>
<keyword id="KW-1185">Reference proteome</keyword>
<keyword id="KW-0735">Signal-anchor</keyword>
<keyword id="KW-0812">Transmembrane</keyword>
<keyword id="KW-1133">Transmembrane helix</keyword>
<keyword id="KW-0813">Transport</keyword>
<accession>P33754</accession>
<accession>D6VQG7</accession>
<sequence length="206" mass="24231">MSEFNETKFSNNGTFFETEEPIVETKSISVYTPLIYVFILVVSLVMFASSYRKKQAKKISEQPSIFDENDAHDLYFQIKEMSENEKIHEKVLKAALLNRGAESVRRSLKLKELAPQINLLYKNGSIGEDYWKRFETEVKLIELEFKDTLQEAERLQPGWVQLFVMVCKEICFNQALSRRYQSILKRKEVCIKEWELKINNDGRLVN</sequence>
<protein>
    <recommendedName>
        <fullName>Translocation protein SEC66</fullName>
    </recommendedName>
    <alternativeName>
        <fullName>Protein HSS1</fullName>
    </alternativeName>
    <alternativeName>
        <fullName>Sec62/63 complex 31.5 kDa subunit</fullName>
    </alternativeName>
</protein>
<organism>
    <name type="scientific">Saccharomyces cerevisiae (strain ATCC 204508 / S288c)</name>
    <name type="common">Baker's yeast</name>
    <dbReference type="NCBI Taxonomy" id="559292"/>
    <lineage>
        <taxon>Eukaryota</taxon>
        <taxon>Fungi</taxon>
        <taxon>Dikarya</taxon>
        <taxon>Ascomycota</taxon>
        <taxon>Saccharomycotina</taxon>
        <taxon>Saccharomycetes</taxon>
        <taxon>Saccharomycetales</taxon>
        <taxon>Saccharomycetaceae</taxon>
        <taxon>Saccharomyces</taxon>
    </lineage>
</organism>
<feature type="chain" id="PRO_0000097663" description="Translocation protein SEC66">
    <location>
        <begin position="1"/>
        <end position="206"/>
    </location>
</feature>
<feature type="topological domain" description="Lumenal">
    <location>
        <begin position="1"/>
        <end position="27"/>
    </location>
</feature>
<feature type="transmembrane region" description="Helical; Signal-anchor for type II membrane protein">
    <location>
        <begin position="28"/>
        <end position="48"/>
    </location>
</feature>
<feature type="topological domain" description="Cytoplasmic">
    <location>
        <begin position="49"/>
        <end position="206"/>
    </location>
</feature>
<feature type="glycosylation site" description="N-linked (GlcNAc...) asparagine" evidence="5">
    <location>
        <position position="5"/>
    </location>
</feature>
<feature type="glycosylation site" description="N-linked (GlcNAc...) asparagine" evidence="5">
    <location>
        <position position="12"/>
    </location>
</feature>
<feature type="helix" evidence="6">
    <location>
        <begin position="72"/>
        <end position="85"/>
    </location>
</feature>
<feature type="helix" evidence="6">
    <location>
        <begin position="90"/>
        <end position="123"/>
    </location>
</feature>
<feature type="helix" evidence="6">
    <location>
        <begin position="129"/>
        <end position="155"/>
    </location>
</feature>
<feature type="helix" evidence="6">
    <location>
        <begin position="161"/>
        <end position="181"/>
    </location>
</feature>
<feature type="helix" evidence="6">
    <location>
        <begin position="183"/>
        <end position="194"/>
    </location>
</feature>
<feature type="helix" evidence="6">
    <location>
        <begin position="200"/>
        <end position="202"/>
    </location>
</feature>
<dbReference type="EMBL" id="U00797">
    <property type="protein sequence ID" value="AAA18910.1"/>
    <property type="molecule type" value="Unassigned_DNA"/>
</dbReference>
<dbReference type="EMBL" id="X72224">
    <property type="protein sequence ID" value="CAA51025.1"/>
    <property type="molecule type" value="Genomic_DNA"/>
</dbReference>
<dbReference type="EMBL" id="X74437">
    <property type="protein sequence ID" value="CAA52451.1"/>
    <property type="molecule type" value="Genomic_DNA"/>
</dbReference>
<dbReference type="EMBL" id="Z36040">
    <property type="protein sequence ID" value="CAA85132.1"/>
    <property type="molecule type" value="Genomic_DNA"/>
</dbReference>
<dbReference type="EMBL" id="AY558125">
    <property type="protein sequence ID" value="AAS56451.1"/>
    <property type="molecule type" value="Genomic_DNA"/>
</dbReference>
<dbReference type="EMBL" id="BK006936">
    <property type="protein sequence ID" value="DAA07287.1"/>
    <property type="molecule type" value="Genomic_DNA"/>
</dbReference>
<dbReference type="PIR" id="A47735">
    <property type="entry name" value="A47735"/>
</dbReference>
<dbReference type="RefSeq" id="NP_009730.3">
    <property type="nucleotide sequence ID" value="NM_001178519.3"/>
</dbReference>
<dbReference type="PDB" id="6N3Q">
    <property type="method" value="EM"/>
    <property type="resolution" value="3.68 A"/>
    <property type="chains" value="E=1-206"/>
</dbReference>
<dbReference type="PDB" id="6ND1">
    <property type="method" value="EM"/>
    <property type="resolution" value="4.10 A"/>
    <property type="chains" value="E=1-206"/>
</dbReference>
<dbReference type="PDB" id="7AFT">
    <property type="method" value="EM"/>
    <property type="resolution" value="4.40 A"/>
    <property type="chains" value="E=1-206"/>
</dbReference>
<dbReference type="PDB" id="7KAH">
    <property type="method" value="EM"/>
    <property type="resolution" value="3.10 A"/>
    <property type="chains" value="E=1-206"/>
</dbReference>
<dbReference type="PDB" id="7KAI">
    <property type="method" value="EM"/>
    <property type="resolution" value="3.20 A"/>
    <property type="chains" value="E=1-206"/>
</dbReference>
<dbReference type="PDB" id="7KAJ">
    <property type="method" value="EM"/>
    <property type="resolution" value="3.10 A"/>
    <property type="chains" value="E=1-206"/>
</dbReference>
<dbReference type="PDB" id="7KAO">
    <property type="method" value="EM"/>
    <property type="resolution" value="4.00 A"/>
    <property type="chains" value="E=1-206"/>
</dbReference>
<dbReference type="PDB" id="7KAP">
    <property type="method" value="EM"/>
    <property type="resolution" value="4.10 A"/>
    <property type="chains" value="E=1-206"/>
</dbReference>
<dbReference type="PDB" id="7KAQ">
    <property type="method" value="EM"/>
    <property type="resolution" value="4.00 A"/>
    <property type="chains" value="E=1-206"/>
</dbReference>
<dbReference type="PDB" id="7KAR">
    <property type="method" value="EM"/>
    <property type="resolution" value="4.00 A"/>
    <property type="chains" value="E=1-206"/>
</dbReference>
<dbReference type="PDB" id="7KAS">
    <property type="method" value="EM"/>
    <property type="resolution" value="3.90 A"/>
    <property type="chains" value="E=1-206"/>
</dbReference>
<dbReference type="PDB" id="7KAT">
    <property type="method" value="EM"/>
    <property type="resolution" value="4.40 A"/>
    <property type="chains" value="E=1-206"/>
</dbReference>
<dbReference type="PDB" id="7KAU">
    <property type="method" value="EM"/>
    <property type="resolution" value="4.00 A"/>
    <property type="chains" value="E=1-206"/>
</dbReference>
<dbReference type="PDB" id="7KB5">
    <property type="method" value="EM"/>
    <property type="resolution" value="3.80 A"/>
    <property type="chains" value="E=1-206"/>
</dbReference>
<dbReference type="PDBsum" id="6N3Q"/>
<dbReference type="PDBsum" id="6ND1"/>
<dbReference type="PDBsum" id="7AFT"/>
<dbReference type="PDBsum" id="7KAH"/>
<dbReference type="PDBsum" id="7KAI"/>
<dbReference type="PDBsum" id="7KAJ"/>
<dbReference type="PDBsum" id="7KAO"/>
<dbReference type="PDBsum" id="7KAP"/>
<dbReference type="PDBsum" id="7KAQ"/>
<dbReference type="PDBsum" id="7KAR"/>
<dbReference type="PDBsum" id="7KAS"/>
<dbReference type="PDBsum" id="7KAT"/>
<dbReference type="PDBsum" id="7KAU"/>
<dbReference type="PDBsum" id="7KB5"/>
<dbReference type="EMDB" id="EMD-0336"/>
<dbReference type="EMDB" id="EMD-0440"/>
<dbReference type="EMDB" id="EMD-11774"/>
<dbReference type="EMDB" id="EMD-22770"/>
<dbReference type="EMDB" id="EMD-22771"/>
<dbReference type="EMDB" id="EMD-22772"/>
<dbReference type="EMDB" id="EMD-22778"/>
<dbReference type="EMDB" id="EMD-22779"/>
<dbReference type="EMDB" id="EMD-22780"/>
<dbReference type="EMDB" id="EMD-22781"/>
<dbReference type="EMDB" id="EMD-22782"/>
<dbReference type="EMDB" id="EMD-22783"/>
<dbReference type="EMDB" id="EMD-22784"/>
<dbReference type="EMDB" id="EMD-22787"/>
<dbReference type="EMDB" id="EMD-29608"/>
<dbReference type="EMDB" id="EMD-29609"/>
<dbReference type="EMDB" id="EMD-29610"/>
<dbReference type="EMDB" id="EMD-29611"/>
<dbReference type="EMDB" id="EMD-29612"/>
<dbReference type="EMDB" id="EMD-29613"/>
<dbReference type="EMDB" id="EMD-29614"/>
<dbReference type="EMDB" id="EMD-29616"/>
<dbReference type="EMDB" id="EMD-29617"/>
<dbReference type="EMDB" id="EMD-29635"/>
<dbReference type="SMR" id="P33754"/>
<dbReference type="BioGRID" id="32871">
    <property type="interactions" value="608"/>
</dbReference>
<dbReference type="ComplexPortal" id="CPX-3055">
    <property type="entry name" value="Translocon complex"/>
</dbReference>
<dbReference type="ComplexPortal" id="CPX-3056">
    <property type="entry name" value="SEC62-SEC63 complex"/>
</dbReference>
<dbReference type="DIP" id="DIP-1694N"/>
<dbReference type="FunCoup" id="P33754">
    <property type="interactions" value="87"/>
</dbReference>
<dbReference type="IntAct" id="P33754">
    <property type="interactions" value="43"/>
</dbReference>
<dbReference type="MINT" id="P33754"/>
<dbReference type="STRING" id="4932.YBR171W"/>
<dbReference type="TCDB" id="3.A.5.8.1">
    <property type="family name" value="the general secretory pathway (sec) family"/>
</dbReference>
<dbReference type="GlyCosmos" id="P33754">
    <property type="glycosylation" value="2 sites, No reported glycans"/>
</dbReference>
<dbReference type="GlyGen" id="P33754">
    <property type="glycosylation" value="2 sites"/>
</dbReference>
<dbReference type="iPTMnet" id="P33754"/>
<dbReference type="PaxDb" id="4932-YBR171W"/>
<dbReference type="PeptideAtlas" id="P33754"/>
<dbReference type="EnsemblFungi" id="YBR171W_mRNA">
    <property type="protein sequence ID" value="YBR171W"/>
    <property type="gene ID" value="YBR171W"/>
</dbReference>
<dbReference type="GeneID" id="852469"/>
<dbReference type="KEGG" id="sce:YBR171W"/>
<dbReference type="AGR" id="SGD:S000000375"/>
<dbReference type="SGD" id="S000000375">
    <property type="gene designation" value="SEC66"/>
</dbReference>
<dbReference type="VEuPathDB" id="FungiDB:YBR171W"/>
<dbReference type="eggNOG" id="KOG4699">
    <property type="taxonomic scope" value="Eukaryota"/>
</dbReference>
<dbReference type="HOGENOM" id="CLU_066294_1_1_1"/>
<dbReference type="InParanoid" id="P33754"/>
<dbReference type="OMA" id="DYWQRYQ"/>
<dbReference type="OrthoDB" id="73168at2759"/>
<dbReference type="BioCyc" id="YEAST:G3O-29119-MONOMER"/>
<dbReference type="BioGRID-ORCS" id="852469">
    <property type="hits" value="0 hits in 10 CRISPR screens"/>
</dbReference>
<dbReference type="PRO" id="PR:P33754"/>
<dbReference type="Proteomes" id="UP000002311">
    <property type="component" value="Chromosome II"/>
</dbReference>
<dbReference type="RNAct" id="P33754">
    <property type="molecule type" value="protein"/>
</dbReference>
<dbReference type="GO" id="GO:0071944">
    <property type="term" value="C:cell periphery"/>
    <property type="evidence" value="ECO:0007005"/>
    <property type="project" value="SGD"/>
</dbReference>
<dbReference type="GO" id="GO:0005783">
    <property type="term" value="C:endoplasmic reticulum"/>
    <property type="evidence" value="ECO:0000314"/>
    <property type="project" value="SGD"/>
</dbReference>
<dbReference type="GO" id="GO:0005789">
    <property type="term" value="C:endoplasmic reticulum membrane"/>
    <property type="evidence" value="ECO:0000314"/>
    <property type="project" value="SGD"/>
</dbReference>
<dbReference type="GO" id="GO:0030867">
    <property type="term" value="C:rough endoplasmic reticulum membrane"/>
    <property type="evidence" value="ECO:0000303"/>
    <property type="project" value="ComplexPortal"/>
</dbReference>
<dbReference type="GO" id="GO:0031207">
    <property type="term" value="C:Sec62/Sec63 complex"/>
    <property type="evidence" value="ECO:0000353"/>
    <property type="project" value="ComplexPortal"/>
</dbReference>
<dbReference type="GO" id="GO:0071256">
    <property type="term" value="C:translocon complex"/>
    <property type="evidence" value="ECO:0000353"/>
    <property type="project" value="ComplexPortal"/>
</dbReference>
<dbReference type="GO" id="GO:0030447">
    <property type="term" value="P:filamentous growth"/>
    <property type="evidence" value="ECO:0000315"/>
    <property type="project" value="SGD"/>
</dbReference>
<dbReference type="GO" id="GO:0031204">
    <property type="term" value="P:post-translational protein targeting to membrane, translocation"/>
    <property type="evidence" value="ECO:0000314"/>
    <property type="project" value="ComplexPortal"/>
</dbReference>
<dbReference type="InterPro" id="IPR018624">
    <property type="entry name" value="Sec66"/>
</dbReference>
<dbReference type="PANTHER" id="PTHR28229">
    <property type="entry name" value="TRANSLOCATION PROTEIN SEC66"/>
    <property type="match status" value="1"/>
</dbReference>
<dbReference type="PANTHER" id="PTHR28229:SF1">
    <property type="entry name" value="TRANSLOCATION PROTEIN SEC66"/>
    <property type="match status" value="1"/>
</dbReference>
<dbReference type="Pfam" id="PF09802">
    <property type="entry name" value="Sec66"/>
    <property type="match status" value="1"/>
</dbReference>
<evidence type="ECO:0000269" key="1">
    <source>
    </source>
</evidence>
<evidence type="ECO:0000269" key="2">
    <source>
    </source>
</evidence>
<evidence type="ECO:0000269" key="3">
    <source>
    </source>
</evidence>
<evidence type="ECO:0000269" key="4">
    <source>
    </source>
</evidence>
<evidence type="ECO:0000305" key="5"/>
<evidence type="ECO:0007829" key="6">
    <source>
        <dbReference type="PDB" id="7KAH"/>
    </source>
</evidence>
<gene>
    <name type="primary">SEC66</name>
    <name type="synonym">HSS1</name>
    <name type="synonym">SEC71</name>
    <name type="ordered locus">YBR171W</name>
    <name type="ORF">YBR1232</name>
</gene>
<reference key="1">
    <citation type="journal article" date="1993" name="Mol. Biol. Cell">
        <title>Structural and functional characterization of Sec66p, a new subunit of the polypeptide translocation apparatus in the yeast endoplasmic reticulum.</title>
        <authorList>
            <person name="Feldheim D."/>
            <person name="Yoshimura K."/>
            <person name="Admon A."/>
            <person name="Schekman R."/>
        </authorList>
    </citation>
    <scope>NUCLEOTIDE SEQUENCE [GENOMIC DNA]</scope>
    <scope>PARTIAL PROTEIN SEQUENCE</scope>
    <scope>SUBCELLULAR LOCATION</scope>
    <scope>IDENTIFICATION IN THE SEC62/63 COMPLEX</scope>
</reference>
<reference key="2">
    <citation type="journal article" date="1993" name="Mol. Biol. Cell">
        <title>Suppression of a sec63 mutation identifies a novel component of the yeast endoplasmic reticulum translocation apparatus.</title>
        <authorList>
            <person name="Kurihara T."/>
            <person name="Silver P.A."/>
        </authorList>
    </citation>
    <scope>NUCLEOTIDE SEQUENCE [GENOMIC DNA]</scope>
</reference>
<reference key="3">
    <citation type="journal article" date="1993" name="Yeast">
        <title>Sequence and function analysis of a 4.3 kb fragment of Saccharomyces cerevisiae chromosome II including three open reading frames.</title>
        <authorList>
            <person name="Schaaff-Gerstenschlaeger I."/>
            <person name="Bauer A."/>
            <person name="Boles E."/>
            <person name="Zimmermann F.K."/>
        </authorList>
    </citation>
    <scope>NUCLEOTIDE SEQUENCE [GENOMIC DNA]</scope>
    <source>
        <strain>ATCC 204508 / S288c</strain>
    </source>
</reference>
<reference key="4">
    <citation type="journal article" date="1994" name="EMBO J.">
        <title>Complete DNA sequence of yeast chromosome II.</title>
        <authorList>
            <person name="Feldmann H."/>
            <person name="Aigle M."/>
            <person name="Aljinovic G."/>
            <person name="Andre B."/>
            <person name="Baclet M.C."/>
            <person name="Barthe C."/>
            <person name="Baur A."/>
            <person name="Becam A.-M."/>
            <person name="Biteau N."/>
            <person name="Boles E."/>
            <person name="Brandt T."/>
            <person name="Brendel M."/>
            <person name="Brueckner M."/>
            <person name="Bussereau F."/>
            <person name="Christiansen C."/>
            <person name="Contreras R."/>
            <person name="Crouzet M."/>
            <person name="Cziepluch C."/>
            <person name="Demolis N."/>
            <person name="Delaveau T."/>
            <person name="Doignon F."/>
            <person name="Domdey H."/>
            <person name="Duesterhus S."/>
            <person name="Dubois E."/>
            <person name="Dujon B."/>
            <person name="El Bakkoury M."/>
            <person name="Entian K.-D."/>
            <person name="Feuermann M."/>
            <person name="Fiers W."/>
            <person name="Fobo G.M."/>
            <person name="Fritz C."/>
            <person name="Gassenhuber J."/>
            <person name="Glansdorff N."/>
            <person name="Goffeau A."/>
            <person name="Grivell L.A."/>
            <person name="de Haan M."/>
            <person name="Hein C."/>
            <person name="Herbert C.J."/>
            <person name="Hollenberg C.P."/>
            <person name="Holmstroem K."/>
            <person name="Jacq C."/>
            <person name="Jacquet M."/>
            <person name="Jauniaux J.-C."/>
            <person name="Jonniaux J.-L."/>
            <person name="Kallesoee T."/>
            <person name="Kiesau P."/>
            <person name="Kirchrath L."/>
            <person name="Koetter P."/>
            <person name="Korol S."/>
            <person name="Liebl S."/>
            <person name="Logghe M."/>
            <person name="Lohan A.J.E."/>
            <person name="Louis E.J."/>
            <person name="Li Z.Y."/>
            <person name="Maat M.J."/>
            <person name="Mallet L."/>
            <person name="Mannhaupt G."/>
            <person name="Messenguy F."/>
            <person name="Miosga T."/>
            <person name="Molemans F."/>
            <person name="Mueller S."/>
            <person name="Nasr F."/>
            <person name="Obermaier B."/>
            <person name="Perea J."/>
            <person name="Pierard A."/>
            <person name="Piravandi E."/>
            <person name="Pohl F.M."/>
            <person name="Pohl T.M."/>
            <person name="Potier S."/>
            <person name="Proft M."/>
            <person name="Purnelle B."/>
            <person name="Ramezani Rad M."/>
            <person name="Rieger M."/>
            <person name="Rose M."/>
            <person name="Schaaff-Gerstenschlaeger I."/>
            <person name="Scherens B."/>
            <person name="Schwarzlose C."/>
            <person name="Skala J."/>
            <person name="Slonimski P.P."/>
            <person name="Smits P.H.M."/>
            <person name="Souciet J.-L."/>
            <person name="Steensma H.Y."/>
            <person name="Stucka R."/>
            <person name="Urrestarazu L.A."/>
            <person name="van der Aart Q.J.M."/>
            <person name="Van Dyck L."/>
            <person name="Vassarotti A."/>
            <person name="Vetter I."/>
            <person name="Vierendeels F."/>
            <person name="Vissers S."/>
            <person name="Wagner G."/>
            <person name="de Wergifosse P."/>
            <person name="Wolfe K.H."/>
            <person name="Zagulski M."/>
            <person name="Zimmermann F.K."/>
            <person name="Mewes H.-W."/>
            <person name="Kleine K."/>
        </authorList>
    </citation>
    <scope>NUCLEOTIDE SEQUENCE [LARGE SCALE GENOMIC DNA]</scope>
    <source>
        <strain>ATCC 204508 / S288c</strain>
    </source>
</reference>
<reference key="5">
    <citation type="journal article" date="2014" name="G3 (Bethesda)">
        <title>The reference genome sequence of Saccharomyces cerevisiae: Then and now.</title>
        <authorList>
            <person name="Engel S.R."/>
            <person name="Dietrich F.S."/>
            <person name="Fisk D.G."/>
            <person name="Binkley G."/>
            <person name="Balakrishnan R."/>
            <person name="Costanzo M.C."/>
            <person name="Dwight S.S."/>
            <person name="Hitz B.C."/>
            <person name="Karra K."/>
            <person name="Nash R.S."/>
            <person name="Weng S."/>
            <person name="Wong E.D."/>
            <person name="Lloyd P."/>
            <person name="Skrzypek M.S."/>
            <person name="Miyasato S.R."/>
            <person name="Simison M."/>
            <person name="Cherry J.M."/>
        </authorList>
    </citation>
    <scope>GENOME REANNOTATION</scope>
    <source>
        <strain>ATCC 204508 / S288c</strain>
    </source>
</reference>
<reference key="6">
    <citation type="journal article" date="2007" name="Genome Res.">
        <title>Approaching a complete repository of sequence-verified protein-encoding clones for Saccharomyces cerevisiae.</title>
        <authorList>
            <person name="Hu Y."/>
            <person name="Rolfs A."/>
            <person name="Bhullar B."/>
            <person name="Murthy T.V.S."/>
            <person name="Zhu C."/>
            <person name="Berger M.F."/>
            <person name="Camargo A.A."/>
            <person name="Kelley F."/>
            <person name="McCarron S."/>
            <person name="Jepson D."/>
            <person name="Richardson A."/>
            <person name="Raphael J."/>
            <person name="Moreira D."/>
            <person name="Taycher E."/>
            <person name="Zuo D."/>
            <person name="Mohr S."/>
            <person name="Kane M.F."/>
            <person name="Williamson J."/>
            <person name="Simpson A.J.G."/>
            <person name="Bulyk M.L."/>
            <person name="Harlow E."/>
            <person name="Marsischky G."/>
            <person name="Kolodner R.D."/>
            <person name="LaBaer J."/>
        </authorList>
    </citation>
    <scope>NUCLEOTIDE SEQUENCE [GENOMIC DNA]</scope>
    <source>
        <strain>ATCC 204508 / S288c</strain>
    </source>
</reference>
<reference key="7">
    <citation type="journal article" date="1991" name="Nature">
        <title>Assembly of yeast Sec proteins involved in translocation into the endoplasmic reticulum into a membrane-bound multisubunit complex.</title>
        <authorList>
            <person name="Deshaies R.J."/>
            <person name="Sanders S.L."/>
            <person name="Feldheim D.A."/>
            <person name="Schekman R."/>
        </authorList>
    </citation>
    <scope>IDENTIFICATION IN THE SEC62/63 COMPLEX</scope>
</reference>
<reference key="8">
    <citation type="journal article" date="1993" name="J. Cell Biol.">
        <title>A Sec63p-BiP complex from yeast is required for protein translocation in a reconstituted proteoliposome.</title>
        <authorList>
            <person name="Brodsky J.L."/>
            <person name="Schekman R."/>
        </authorList>
    </citation>
    <scope>IDENTIFICATION IN A COMPLEX WITH KAR2; SEC63 AND SEC72</scope>
</reference>
<reference key="9">
    <citation type="journal article" date="1995" name="Cell">
        <title>Posttranslational protein transport in yeast reconstituted with a purified complex of Sec proteins and Kar2p.</title>
        <authorList>
            <person name="Panzner S."/>
            <person name="Dreier L."/>
            <person name="Hartmann E."/>
            <person name="Kostka S."/>
            <person name="Rapoport T.A."/>
        </authorList>
    </citation>
    <scope>ASSOCIATION OF THE SEC62/63 COMPLEX WITH THE SEC61 COMPLEX</scope>
</reference>
<reference key="10">
    <citation type="journal article" date="2003" name="Nature">
        <title>Global analysis of protein expression in yeast.</title>
        <authorList>
            <person name="Ghaemmaghami S."/>
            <person name="Huh W.-K."/>
            <person name="Bower K."/>
            <person name="Howson R.W."/>
            <person name="Belle A."/>
            <person name="Dephoure N."/>
            <person name="O'Shea E.K."/>
            <person name="Weissman J.S."/>
        </authorList>
    </citation>
    <scope>LEVEL OF PROTEIN EXPRESSION [LARGE SCALE ANALYSIS]</scope>
</reference>